<accession>Q19052</accession>
<accession>Q95ZW6</accession>
<feature type="chain" id="PRO_0000286081" description="Eukaryotic translation initiation factor 2A">
    <location>
        <begin position="1"/>
        <end position="570"/>
    </location>
</feature>
<feature type="repeat" description="WD 1">
    <location>
        <begin position="274"/>
        <end position="316"/>
    </location>
</feature>
<feature type="repeat" description="WD 2">
    <location>
        <begin position="318"/>
        <end position="358"/>
    </location>
</feature>
<feature type="region of interest" description="Disordered" evidence="3">
    <location>
        <begin position="468"/>
        <end position="526"/>
    </location>
</feature>
<feature type="coiled-coil region" evidence="2">
    <location>
        <begin position="519"/>
        <end position="541"/>
    </location>
</feature>
<feature type="compositionally biased region" description="Low complexity" evidence="3">
    <location>
        <begin position="482"/>
        <end position="492"/>
    </location>
</feature>
<feature type="compositionally biased region" description="Polar residues" evidence="3">
    <location>
        <begin position="493"/>
        <end position="518"/>
    </location>
</feature>
<feature type="splice variant" id="VSP_024979" description="In isoform b." evidence="4">
    <original>TAENQKPEPNVRVYSLADGKHVSTFSAPKEASWEPQFSDDESLAARMVGSEVFFYTNMSFDRYDHKLVEKGATN</original>
    <variation>RTKSQNQMCESTVLRMESTYQRSQLQKKHRGSLSFRMMSRWLQEWLAVKSSFIQTCLSTVTTTSLSRRVRPTSH</variation>
    <location>
        <begin position="104"/>
        <end position="177"/>
    </location>
</feature>
<feature type="splice variant" id="VSP_024980" description="In isoform b." evidence="4">
    <location>
        <begin position="178"/>
        <end position="570"/>
    </location>
</feature>
<comment type="function">
    <text evidence="1">Functions in the early steps of protein synthesis of a small number of specific mRNAs. Acts by directing the binding of methionyl-tRNAi to 40S ribosomal subunits. In contrast to the eIF-2 complex, it binds methionyl-tRNAi to 40S subunits in a codon-dependent manner, whereas the eIF-2 complex binds methionyl-tRNAi to 40S subunits in a GTP-dependent manner.</text>
</comment>
<comment type="alternative products">
    <event type="alternative splicing"/>
    <isoform>
        <id>Q19052-1</id>
        <name evidence="5">a</name>
        <sequence type="displayed"/>
    </isoform>
    <isoform>
        <id>Q19052-2</id>
        <name evidence="6">b</name>
        <sequence type="described" ref="VSP_024979 VSP_024980"/>
    </isoform>
</comment>
<comment type="similarity">
    <text evidence="4">Belongs to the WD repeat EIF2A family.</text>
</comment>
<dbReference type="EMBL" id="BX284602">
    <property type="protein sequence ID" value="CAA91279.2"/>
    <property type="molecule type" value="Genomic_DNA"/>
</dbReference>
<dbReference type="EMBL" id="BX284602">
    <property type="protein sequence ID" value="CAC42280.2"/>
    <property type="molecule type" value="Genomic_DNA"/>
</dbReference>
<dbReference type="PIR" id="T20450">
    <property type="entry name" value="T20450"/>
</dbReference>
<dbReference type="RefSeq" id="NP_001379279.1">
    <molecule id="Q19052-2"/>
    <property type="nucleotide sequence ID" value="NM_001393177.1"/>
</dbReference>
<dbReference type="RefSeq" id="NP_496239.2">
    <molecule id="Q19052-1"/>
    <property type="nucleotide sequence ID" value="NM_063838.8"/>
</dbReference>
<dbReference type="RefSeq" id="NP_496240.2">
    <property type="nucleotide sequence ID" value="NM_063839.4"/>
</dbReference>
<dbReference type="SMR" id="Q19052"/>
<dbReference type="BioGRID" id="39924">
    <property type="interactions" value="17"/>
</dbReference>
<dbReference type="FunCoup" id="Q19052">
    <property type="interactions" value="3014"/>
</dbReference>
<dbReference type="STRING" id="6239.E04D5.1a.2"/>
<dbReference type="iPTMnet" id="Q19052"/>
<dbReference type="PaxDb" id="6239-E04D5.1a.2"/>
<dbReference type="PeptideAtlas" id="Q19052"/>
<dbReference type="EnsemblMetazoa" id="E04D5.1a.1">
    <molecule id="Q19052-1"/>
    <property type="protein sequence ID" value="E04D5.1a.1"/>
    <property type="gene ID" value="WBGene00008480"/>
</dbReference>
<dbReference type="EnsemblMetazoa" id="E04D5.1b.1">
    <molecule id="Q19052-2"/>
    <property type="protein sequence ID" value="E04D5.1b.1"/>
    <property type="gene ID" value="WBGene00008480"/>
</dbReference>
<dbReference type="GeneID" id="174606"/>
<dbReference type="KEGG" id="cel:CELE_E04D5.1"/>
<dbReference type="UCSC" id="E04D5.1a.1">
    <molecule id="Q19052-1"/>
    <property type="organism name" value="c. elegans"/>
</dbReference>
<dbReference type="AGR" id="WB:WBGene00008480"/>
<dbReference type="CTD" id="174606"/>
<dbReference type="WormBase" id="E04D5.1a">
    <molecule id="Q19052-1"/>
    <property type="protein sequence ID" value="CE37820"/>
    <property type="gene ID" value="WBGene00008480"/>
    <property type="gene designation" value="eif-2A"/>
</dbReference>
<dbReference type="WormBase" id="E04D5.1b">
    <molecule id="Q19052-2"/>
    <property type="protein sequence ID" value="CE37821"/>
    <property type="gene ID" value="WBGene00008480"/>
    <property type="gene designation" value="eif-2A"/>
</dbReference>
<dbReference type="eggNOG" id="KOG2315">
    <property type="taxonomic scope" value="Eukaryota"/>
</dbReference>
<dbReference type="GeneTree" id="ENSGT00730000111053"/>
<dbReference type="HOGENOM" id="CLU_013809_1_0_1"/>
<dbReference type="InParanoid" id="Q19052"/>
<dbReference type="OMA" id="RCCAYSP"/>
<dbReference type="OrthoDB" id="2194683at2759"/>
<dbReference type="PhylomeDB" id="Q19052"/>
<dbReference type="PRO" id="PR:Q19052"/>
<dbReference type="Proteomes" id="UP000001940">
    <property type="component" value="Chromosome II"/>
</dbReference>
<dbReference type="Bgee" id="WBGene00008480">
    <property type="expression patterns" value="Expressed in adult organism and 4 other cell types or tissues"/>
</dbReference>
<dbReference type="GO" id="GO:0022627">
    <property type="term" value="C:cytosolic small ribosomal subunit"/>
    <property type="evidence" value="ECO:0000318"/>
    <property type="project" value="GO_Central"/>
</dbReference>
<dbReference type="GO" id="GO:0003729">
    <property type="term" value="F:mRNA binding"/>
    <property type="evidence" value="ECO:0000318"/>
    <property type="project" value="GO_Central"/>
</dbReference>
<dbReference type="GO" id="GO:0043022">
    <property type="term" value="F:ribosome binding"/>
    <property type="evidence" value="ECO:0000318"/>
    <property type="project" value="GO_Central"/>
</dbReference>
<dbReference type="GO" id="GO:0003743">
    <property type="term" value="F:translation initiation factor activity"/>
    <property type="evidence" value="ECO:0000318"/>
    <property type="project" value="GO_Central"/>
</dbReference>
<dbReference type="GO" id="GO:0000049">
    <property type="term" value="F:tRNA binding"/>
    <property type="evidence" value="ECO:0000318"/>
    <property type="project" value="GO_Central"/>
</dbReference>
<dbReference type="GO" id="GO:0010628">
    <property type="term" value="P:positive regulation of gene expression"/>
    <property type="evidence" value="ECO:0000315"/>
    <property type="project" value="UniProtKB"/>
</dbReference>
<dbReference type="GO" id="GO:0006417">
    <property type="term" value="P:regulation of translation"/>
    <property type="evidence" value="ECO:0007669"/>
    <property type="project" value="UniProtKB-KW"/>
</dbReference>
<dbReference type="FunFam" id="2.130.10.10:FF:000854">
    <property type="entry name" value="Eukaryotic translation initiation factor 2A"/>
    <property type="match status" value="1"/>
</dbReference>
<dbReference type="Gene3D" id="2.130.10.10">
    <property type="entry name" value="YVTN repeat-like/Quinoprotein amine dehydrogenase"/>
    <property type="match status" value="1"/>
</dbReference>
<dbReference type="InterPro" id="IPR011387">
    <property type="entry name" value="TIF2A"/>
</dbReference>
<dbReference type="InterPro" id="IPR013979">
    <property type="entry name" value="TIF_beta_prop-like"/>
</dbReference>
<dbReference type="InterPro" id="IPR015943">
    <property type="entry name" value="WD40/YVTN_repeat-like_dom_sf"/>
</dbReference>
<dbReference type="PANTHER" id="PTHR13227">
    <property type="entry name" value="EUKARYOTIC TRANSLATION INITIATION FACTOR 2A"/>
    <property type="match status" value="1"/>
</dbReference>
<dbReference type="PANTHER" id="PTHR13227:SF0">
    <property type="entry name" value="EUKARYOTIC TRANSLATION INITIATION FACTOR 2A"/>
    <property type="match status" value="1"/>
</dbReference>
<dbReference type="Pfam" id="PF08662">
    <property type="entry name" value="eIF2A"/>
    <property type="match status" value="1"/>
</dbReference>
<dbReference type="PIRSF" id="PIRSF017222">
    <property type="entry name" value="eIF2A"/>
    <property type="match status" value="1"/>
</dbReference>
<dbReference type="SUPFAM" id="SSF50993">
    <property type="entry name" value="Peptidase/esterase 'gauge' domain"/>
    <property type="match status" value="1"/>
</dbReference>
<name>EIF2A_CAEEL</name>
<keyword id="KW-0025">Alternative splicing</keyword>
<keyword id="KW-0175">Coiled coil</keyword>
<keyword id="KW-0396">Initiation factor</keyword>
<keyword id="KW-0648">Protein biosynthesis</keyword>
<keyword id="KW-1185">Reference proteome</keyword>
<keyword id="KW-0677">Repeat</keyword>
<keyword id="KW-0810">Translation regulation</keyword>
<keyword id="KW-0853">WD repeat</keyword>
<protein>
    <recommendedName>
        <fullName>Eukaryotic translation initiation factor 2A</fullName>
        <shortName>eIF-2A</shortName>
    </recommendedName>
</protein>
<evidence type="ECO:0000250" key="1">
    <source>
        <dbReference type="UniProtKB" id="Q9BY44"/>
    </source>
</evidence>
<evidence type="ECO:0000255" key="2"/>
<evidence type="ECO:0000256" key="3">
    <source>
        <dbReference type="SAM" id="MobiDB-lite"/>
    </source>
</evidence>
<evidence type="ECO:0000305" key="4"/>
<evidence type="ECO:0000312" key="5">
    <source>
        <dbReference type="WormBase" id="E04D5.1a"/>
    </source>
</evidence>
<evidence type="ECO:0000312" key="6">
    <source>
        <dbReference type="WormBase" id="E04D5.1b"/>
    </source>
</evidence>
<organism>
    <name type="scientific">Caenorhabditis elegans</name>
    <dbReference type="NCBI Taxonomy" id="6239"/>
    <lineage>
        <taxon>Eukaryota</taxon>
        <taxon>Metazoa</taxon>
        <taxon>Ecdysozoa</taxon>
        <taxon>Nematoda</taxon>
        <taxon>Chromadorea</taxon>
        <taxon>Rhabditida</taxon>
        <taxon>Rhabditina</taxon>
        <taxon>Rhabditomorpha</taxon>
        <taxon>Rhabditoidea</taxon>
        <taxon>Rhabditidae</taxon>
        <taxon>Peloderinae</taxon>
        <taxon>Caenorhabditis</taxon>
    </lineage>
</organism>
<reference key="1">
    <citation type="journal article" date="1998" name="Science">
        <title>Genome sequence of the nematode C. elegans: a platform for investigating biology.</title>
        <authorList>
            <consortium name="The C. elegans sequencing consortium"/>
        </authorList>
    </citation>
    <scope>NUCLEOTIDE SEQUENCE [LARGE SCALE GENOMIC DNA]</scope>
    <source>
        <strain>Bristol N2</strain>
    </source>
</reference>
<gene>
    <name evidence="5" type="primary">eif-2A</name>
    <name evidence="5" type="ORF">E04D5.1</name>
</gene>
<proteinExistence type="inferred from homology"/>
<sequence>MGDNLVYAVRSSEGFYLKRGLGKDAVTVFEQNKTSRDVACNVFAYSNNGQLFAYCDNQVTRVFEIATNKEILCVELKRTRKILFSPKDNFLLTFEPWAVYGPKTAENQKPEPNVRVYSLADGKHVSTFSAPKEASWEPQFSDDESLAARMVGSEVFFYTNMSFDRYDHKLVEKGATNFALSPGPAPNHVAVYVPAVGSTPARVRVHRVSESFPVVGNRTFFKSDKAVMTWNQRGQSLLILASVEVDKTNQSYYGEQSLYLINIQSGESVVVPLEKKGPIYAAKWNPNGREFAVCYGYMPAKVTFYNPRGVPIFDTIEGPRNDVFYNAFGNIVLICGFGNIAKGKMEFWDVETKKEIISIEVPNTTLFDWAPDGQHFVTCTTAPRLRIDNSYRFWHYTGRMLAETHFESPKELWEVRWRPMTGYNKFAIKELTKTDKMAAGLPIRKKDASHPLNNVPAGAVRQAGAYIPPHLRKPLGGGGSAGPPSAAAPTPGNQNQRPAQPRANGNGNAPQPFRPQQSEQERKAFQLKKKVEEIKVLKQRVANGDQLQPNQMEKIQRENEYLSELSKLTI</sequence>